<dbReference type="EMBL" id="X04782">
    <property type="protein sequence ID" value="CAA28471.1"/>
    <property type="molecule type" value="mRNA"/>
</dbReference>
<dbReference type="EMBL" id="X12659">
    <property type="protein sequence ID" value="CAA31186.1"/>
    <property type="molecule type" value="mRNA"/>
</dbReference>
<dbReference type="PIR" id="JQ2286">
    <property type="entry name" value="JQ2286"/>
</dbReference>
<dbReference type="PIR" id="S01444">
    <property type="entry name" value="S01444"/>
</dbReference>
<dbReference type="RefSeq" id="NP_001235870.1">
    <property type="nucleotide sequence ID" value="NM_001248941.1"/>
</dbReference>
<dbReference type="SMR" id="P08995"/>
<dbReference type="FunCoup" id="P08995">
    <property type="interactions" value="137"/>
</dbReference>
<dbReference type="STRING" id="3847.P08995"/>
<dbReference type="TCDB" id="1.A.8.12.1">
    <property type="family name" value="the major intrinsic protein (mip) family"/>
</dbReference>
<dbReference type="iPTMnet" id="P08995"/>
<dbReference type="PaxDb" id="3847-GLYMA08G12650.1"/>
<dbReference type="GeneID" id="547904"/>
<dbReference type="KEGG" id="gmx:547904"/>
<dbReference type="eggNOG" id="KOG0223">
    <property type="taxonomic scope" value="Eukaryota"/>
</dbReference>
<dbReference type="InParanoid" id="P08995"/>
<dbReference type="OrthoDB" id="3222at2759"/>
<dbReference type="Proteomes" id="UP000008827">
    <property type="component" value="Unplaced"/>
</dbReference>
<dbReference type="GO" id="GO:0043661">
    <property type="term" value="C:peribacteroid membrane"/>
    <property type="evidence" value="ECO:0007669"/>
    <property type="project" value="UniProtKB-SubCell"/>
</dbReference>
<dbReference type="GO" id="GO:0015267">
    <property type="term" value="F:channel activity"/>
    <property type="evidence" value="ECO:0007669"/>
    <property type="project" value="InterPro"/>
</dbReference>
<dbReference type="GO" id="GO:0009877">
    <property type="term" value="P:nodulation"/>
    <property type="evidence" value="ECO:0007669"/>
    <property type="project" value="UniProtKB-KW"/>
</dbReference>
<dbReference type="CDD" id="cd00333">
    <property type="entry name" value="MIP"/>
    <property type="match status" value="1"/>
</dbReference>
<dbReference type="Gene3D" id="1.20.1080.10">
    <property type="entry name" value="Glycerol uptake facilitator protein"/>
    <property type="match status" value="1"/>
</dbReference>
<dbReference type="InterPro" id="IPR023271">
    <property type="entry name" value="Aquaporin-like"/>
</dbReference>
<dbReference type="InterPro" id="IPR034294">
    <property type="entry name" value="Aquaporin_transptr"/>
</dbReference>
<dbReference type="InterPro" id="IPR000425">
    <property type="entry name" value="MIP"/>
</dbReference>
<dbReference type="InterPro" id="IPR022357">
    <property type="entry name" value="MIP_CS"/>
</dbReference>
<dbReference type="NCBIfam" id="TIGR00861">
    <property type="entry name" value="MIP"/>
    <property type="match status" value="1"/>
</dbReference>
<dbReference type="PANTHER" id="PTHR45724">
    <property type="entry name" value="AQUAPORIN NIP2-1"/>
    <property type="match status" value="1"/>
</dbReference>
<dbReference type="PANTHER" id="PTHR45724:SF18">
    <property type="entry name" value="NODULIN-26"/>
    <property type="match status" value="1"/>
</dbReference>
<dbReference type="Pfam" id="PF00230">
    <property type="entry name" value="MIP"/>
    <property type="match status" value="1"/>
</dbReference>
<dbReference type="PRINTS" id="PR00783">
    <property type="entry name" value="MINTRINSICP"/>
</dbReference>
<dbReference type="SUPFAM" id="SSF81338">
    <property type="entry name" value="Aquaporin-like"/>
    <property type="match status" value="1"/>
</dbReference>
<dbReference type="PROSITE" id="PS00221">
    <property type="entry name" value="MIP"/>
    <property type="match status" value="1"/>
</dbReference>
<evidence type="ECO:0000255" key="1"/>
<evidence type="ECO:0000269" key="2">
    <source>
    </source>
</evidence>
<evidence type="ECO:0000305" key="3"/>
<name>NO26_SOYBN</name>
<keyword id="KW-0472">Membrane</keyword>
<keyword id="KW-0536">Nodulation</keyword>
<keyword id="KW-0597">Phosphoprotein</keyword>
<keyword id="KW-1185">Reference proteome</keyword>
<keyword id="KW-0677">Repeat</keyword>
<keyword id="KW-0812">Transmembrane</keyword>
<keyword id="KW-1133">Transmembrane helix</keyword>
<keyword id="KW-0813">Transport</keyword>
<organism>
    <name type="scientific">Glycine max</name>
    <name type="common">Soybean</name>
    <name type="synonym">Glycine hispida</name>
    <dbReference type="NCBI Taxonomy" id="3847"/>
    <lineage>
        <taxon>Eukaryota</taxon>
        <taxon>Viridiplantae</taxon>
        <taxon>Streptophyta</taxon>
        <taxon>Embryophyta</taxon>
        <taxon>Tracheophyta</taxon>
        <taxon>Spermatophyta</taxon>
        <taxon>Magnoliopsida</taxon>
        <taxon>eudicotyledons</taxon>
        <taxon>Gunneridae</taxon>
        <taxon>Pentapetalae</taxon>
        <taxon>rosids</taxon>
        <taxon>fabids</taxon>
        <taxon>Fabales</taxon>
        <taxon>Fabaceae</taxon>
        <taxon>Papilionoideae</taxon>
        <taxon>50 kb inversion clade</taxon>
        <taxon>NPAAA clade</taxon>
        <taxon>indigoferoid/millettioid clade</taxon>
        <taxon>Phaseoleae</taxon>
        <taxon>Glycine</taxon>
        <taxon>Glycine subgen. Soja</taxon>
    </lineage>
</organism>
<proteinExistence type="evidence at protein level"/>
<accession>P08995</accession>
<protein>
    <recommendedName>
        <fullName>Nodulin-26</fullName>
        <shortName>N-26</shortName>
    </recommendedName>
</protein>
<comment type="function">
    <text>Aquaporins facilitate the transport of water and small neutral solutes across cell membranes. This aquaporin may function in transporting small molecules across the peribacteroid membranes.</text>
</comment>
<comment type="subcellular location">
    <subcellularLocation>
        <location>Symbiosome</location>
        <location>Peribacteroid membrane</location>
        <topology>Multi-pass membrane protein</topology>
    </subcellularLocation>
</comment>
<comment type="induction">
    <text>During nodulation in legume roots after Rhizobium infection.</text>
</comment>
<comment type="domain">
    <text>Aquaporins contain two tandem repeats each containing three membrane-spanning domains and a pore-forming loop with the signature motif Asn-Pro-Ala (NPA).</text>
</comment>
<comment type="similarity">
    <text evidence="3">Belongs to the MIP/aquaporin (TC 1.A.8) family. NIP (TC 1.A.8.12) subfamily.</text>
</comment>
<reference key="1">
    <citation type="journal article" date="1988" name="Nucleic Acids Res.">
        <title>Soybean nodulin 26 is homologous to the major intrinsic protein of the bovine lens fiber membrane.</title>
        <authorList>
            <person name="Sandal N.N."/>
            <person name="Marcker K.A."/>
        </authorList>
    </citation>
    <scope>NUCLEOTIDE SEQUENCE [MRNA]</scope>
    <source>
        <strain>cv. Evans</strain>
    </source>
</reference>
<reference key="2">
    <citation type="journal article" date="1987" name="Nucleic Acids Res.">
        <title>Nodulin-26, a peribacteroid membrane nodulin is expressed independently of the development of the peribacteroid compartment.</title>
        <authorList>
            <person name="Fortin M.G."/>
            <person name="Morrison N.A."/>
            <person name="Verma D.P.S."/>
        </authorList>
    </citation>
    <scope>NUCLEOTIDE SEQUENCE [MRNA] OF 67-271</scope>
    <source>
        <strain>cv. Prize</strain>
    </source>
</reference>
<reference key="3">
    <citation type="submission" date="1992-04" db="EMBL/GenBank/DDBJ databases">
        <authorList>
            <person name="Miao G.H."/>
        </authorList>
    </citation>
    <scope>SEQUENCE REVISION TO 184 AND 257</scope>
</reference>
<reference key="4">
    <citation type="journal article" date="1992" name="Biochemistry">
        <title>Determination of the site of phosphorylation of nodulin 26 by the calcium-dependent protein kinase from soybean nodules.</title>
        <authorList>
            <person name="Waever C.D."/>
            <person name="Roberts D.M."/>
        </authorList>
    </citation>
    <scope>PHOSPHORYLATION AT SER-262 BY CPK</scope>
</reference>
<feature type="chain" id="PRO_0000064071" description="Nodulin-26">
    <location>
        <begin position="1"/>
        <end position="271"/>
    </location>
</feature>
<feature type="transmembrane region" description="Helical; Name=1" evidence="1">
    <location>
        <begin position="40"/>
        <end position="62"/>
    </location>
</feature>
<feature type="transmembrane region" description="Helical; Name=2" evidence="1">
    <location>
        <begin position="72"/>
        <end position="94"/>
    </location>
</feature>
<feature type="transmembrane region" description="Helical; Name=3" evidence="1">
    <location>
        <begin position="115"/>
        <end position="137"/>
    </location>
</feature>
<feature type="transmembrane region" description="Helical; Name=4" evidence="1">
    <location>
        <begin position="152"/>
        <end position="174"/>
    </location>
</feature>
<feature type="transmembrane region" description="Helical; Name=5" evidence="1">
    <location>
        <begin position="181"/>
        <end position="203"/>
    </location>
</feature>
<feature type="transmembrane region" description="Helical; Name=6" evidence="1">
    <location>
        <begin position="225"/>
        <end position="247"/>
    </location>
</feature>
<feature type="short sequence motif" description="NPA 1">
    <location>
        <begin position="97"/>
        <end position="99"/>
    </location>
</feature>
<feature type="short sequence motif" description="NPA 2">
    <location>
        <begin position="209"/>
        <end position="211"/>
    </location>
</feature>
<feature type="modified residue" description="Phosphoserine; by CPK" evidence="2">
    <location>
        <position position="262"/>
    </location>
</feature>
<sequence length="271" mass="28936">MADYSAGTESQEVVVNVTKNTSETIQRSDSLVSVPFLQKLVAEAVGTYFLIFAGCASLVVNENYYNMITFPGIAIVWGLVLTVLVYTVGHISGGHFNPAVTIAFASTRRFPLIQVPAYVVAQLLGSILASGTLRLLFMGNHDQFSGTVPNGTNLQAFVFEFIMTFFLMFVICGVATDNRAVGEFAGIAIGSTLLLNVIIGGPVTGASMNPARSLGPAFVHGEYEGIWIYLLAPVVGAIAGAWVYNIVRYTDKPLSETTKSASFLKGRAASK</sequence>